<accession>Q1C3K8</accession>
<organism>
    <name type="scientific">Yersinia pestis bv. Antiqua (strain Antiqua)</name>
    <dbReference type="NCBI Taxonomy" id="360102"/>
    <lineage>
        <taxon>Bacteria</taxon>
        <taxon>Pseudomonadati</taxon>
        <taxon>Pseudomonadota</taxon>
        <taxon>Gammaproteobacteria</taxon>
        <taxon>Enterobacterales</taxon>
        <taxon>Yersiniaceae</taxon>
        <taxon>Yersinia</taxon>
    </lineage>
</organism>
<proteinExistence type="inferred from homology"/>
<gene>
    <name type="ordered locus">YPA_3002</name>
</gene>
<name>Y3002_YERPA</name>
<protein>
    <recommendedName>
        <fullName evidence="1">Putative transport protein YPA_3002</fullName>
    </recommendedName>
</protein>
<dbReference type="EMBL" id="CP000308">
    <property type="protein sequence ID" value="ABG14964.1"/>
    <property type="molecule type" value="Genomic_DNA"/>
</dbReference>
<dbReference type="RefSeq" id="WP_002209634.1">
    <property type="nucleotide sequence ID" value="NZ_CP009906.1"/>
</dbReference>
<dbReference type="SMR" id="Q1C3K8"/>
<dbReference type="KEGG" id="ypa:YPA_3002"/>
<dbReference type="Proteomes" id="UP000001971">
    <property type="component" value="Chromosome"/>
</dbReference>
<dbReference type="GO" id="GO:0005886">
    <property type="term" value="C:plasma membrane"/>
    <property type="evidence" value="ECO:0007669"/>
    <property type="project" value="UniProtKB-SubCell"/>
</dbReference>
<dbReference type="GO" id="GO:0008324">
    <property type="term" value="F:monoatomic cation transmembrane transporter activity"/>
    <property type="evidence" value="ECO:0007669"/>
    <property type="project" value="InterPro"/>
</dbReference>
<dbReference type="GO" id="GO:0006813">
    <property type="term" value="P:potassium ion transport"/>
    <property type="evidence" value="ECO:0007669"/>
    <property type="project" value="InterPro"/>
</dbReference>
<dbReference type="Gene3D" id="3.30.70.1450">
    <property type="entry name" value="Regulator of K+ conductance, C-terminal domain"/>
    <property type="match status" value="2"/>
</dbReference>
<dbReference type="HAMAP" id="MF_01016">
    <property type="entry name" value="YidE"/>
    <property type="match status" value="1"/>
</dbReference>
<dbReference type="InterPro" id="IPR050144">
    <property type="entry name" value="AAE_transporter"/>
</dbReference>
<dbReference type="InterPro" id="IPR006037">
    <property type="entry name" value="RCK_C"/>
</dbReference>
<dbReference type="InterPro" id="IPR036721">
    <property type="entry name" value="RCK_C_sf"/>
</dbReference>
<dbReference type="InterPro" id="IPR023018">
    <property type="entry name" value="Transpt_YidE_put"/>
</dbReference>
<dbReference type="InterPro" id="IPR006512">
    <property type="entry name" value="YidE_YbjL"/>
</dbReference>
<dbReference type="NCBIfam" id="NF003007">
    <property type="entry name" value="PRK03818.1"/>
    <property type="match status" value="1"/>
</dbReference>
<dbReference type="NCBIfam" id="TIGR01625">
    <property type="entry name" value="YidE_YbjL_dupl"/>
    <property type="match status" value="2"/>
</dbReference>
<dbReference type="PANTHER" id="PTHR30445">
    <property type="entry name" value="K(+)_H(+) ANTIPORTER SUBUNIT KHTT"/>
    <property type="match status" value="1"/>
</dbReference>
<dbReference type="PANTHER" id="PTHR30445:SF3">
    <property type="entry name" value="TRANSPORT PROTEIN YIDE-RELATED"/>
    <property type="match status" value="1"/>
</dbReference>
<dbReference type="Pfam" id="PF06826">
    <property type="entry name" value="Asp-Al_Ex"/>
    <property type="match status" value="2"/>
</dbReference>
<dbReference type="Pfam" id="PF02080">
    <property type="entry name" value="TrkA_C"/>
    <property type="match status" value="2"/>
</dbReference>
<dbReference type="SUPFAM" id="SSF116726">
    <property type="entry name" value="TrkA C-terminal domain-like"/>
    <property type="match status" value="2"/>
</dbReference>
<dbReference type="PROSITE" id="PS51202">
    <property type="entry name" value="RCK_C"/>
    <property type="match status" value="2"/>
</dbReference>
<reference key="1">
    <citation type="journal article" date="2006" name="J. Bacteriol.">
        <title>Complete genome sequence of Yersinia pestis strains Antiqua and Nepal516: evidence of gene reduction in an emerging pathogen.</title>
        <authorList>
            <person name="Chain P.S.G."/>
            <person name="Hu P."/>
            <person name="Malfatti S.A."/>
            <person name="Radnedge L."/>
            <person name="Larimer F."/>
            <person name="Vergez L.M."/>
            <person name="Worsham P."/>
            <person name="Chu M.C."/>
            <person name="Andersen G.L."/>
        </authorList>
    </citation>
    <scope>NUCLEOTIDE SEQUENCE [LARGE SCALE GENOMIC DNA]</scope>
    <source>
        <strain>Antiqua</strain>
    </source>
</reference>
<feature type="chain" id="PRO_1000063259" description="Putative transport protein YPA_3002">
    <location>
        <begin position="1"/>
        <end position="552"/>
    </location>
</feature>
<feature type="transmembrane region" description="Helical" evidence="1">
    <location>
        <begin position="1"/>
        <end position="21"/>
    </location>
</feature>
<feature type="transmembrane region" description="Helical" evidence="1">
    <location>
        <begin position="26"/>
        <end position="46"/>
    </location>
</feature>
<feature type="transmembrane region" description="Helical" evidence="1">
    <location>
        <begin position="65"/>
        <end position="85"/>
    </location>
</feature>
<feature type="transmembrane region" description="Helical" evidence="1">
    <location>
        <begin position="96"/>
        <end position="116"/>
    </location>
</feature>
<feature type="transmembrane region" description="Helical" evidence="1">
    <location>
        <begin position="119"/>
        <end position="139"/>
    </location>
</feature>
<feature type="transmembrane region" description="Helical" evidence="1">
    <location>
        <begin position="158"/>
        <end position="178"/>
    </location>
</feature>
<feature type="transmembrane region" description="Helical" evidence="1">
    <location>
        <begin position="371"/>
        <end position="391"/>
    </location>
</feature>
<feature type="transmembrane region" description="Helical" evidence="1">
    <location>
        <begin position="393"/>
        <end position="413"/>
    </location>
</feature>
<feature type="transmembrane region" description="Helical" evidence="1">
    <location>
        <begin position="439"/>
        <end position="459"/>
    </location>
</feature>
<feature type="transmembrane region" description="Helical" evidence="1">
    <location>
        <begin position="464"/>
        <end position="484"/>
    </location>
</feature>
<feature type="transmembrane region" description="Helical" evidence="1">
    <location>
        <begin position="493"/>
        <end position="513"/>
    </location>
</feature>
<feature type="transmembrane region" description="Helical" evidence="1">
    <location>
        <begin position="530"/>
        <end position="550"/>
    </location>
</feature>
<feature type="domain" description="RCK C-terminal 1" evidence="1">
    <location>
        <begin position="192"/>
        <end position="276"/>
    </location>
</feature>
<feature type="domain" description="RCK C-terminal 2" evidence="1">
    <location>
        <begin position="279"/>
        <end position="361"/>
    </location>
</feature>
<sequence>MSAIALTVSMLALVAVLGLWIGNWKIYGVGLGIGGVLFGGIIVGHFAQTYQIVLNGDMLHFIQEFGLILFVYTIGIQVGPGFFSSLRVSGLRLNCFAILMVVVGGLVTAIIHKLFAVPLPIILGVFSGAVTNTPALGAAQQILTDLGSPPQLVSQMGMGYAMAYPFGICGILLVMWLIRLFFKINIDREAKAFDSSYGQNRELLQTMNVAVRNPNLHGLSVQDVPLLNSDEVVCSRLKRGDLLMVPMPATVIEIGDYLHLVGQRDALEKVRLVVGEEVDVTLSTAGTALQTARVVVTNEAVLGKKIRDLNLKQKYDVVITRLNRAGIELVASNSASLQFGDILNLVGRPEAIEAVSAIVGNAQQKLQQVQMLPVFIGVGLGVLLGSIPLFVPGFPAALRLGLAGGPLVVALILGRIGSIGKLYWFMPPSANLALRELGIVLFLSVVGLKSGGDFINTLVNGDGLAWIGYGAMITGIPLLTVGILARMLVKMNYLTLCGMLAGSMTDPPALAFANGLHPTSGAAALSYATVYPLAMFLRIMSPQILAVLFWTL</sequence>
<evidence type="ECO:0000255" key="1">
    <source>
        <dbReference type="HAMAP-Rule" id="MF_01016"/>
    </source>
</evidence>
<comment type="subcellular location">
    <subcellularLocation>
        <location evidence="1">Cell membrane</location>
        <topology evidence="1">Multi-pass membrane protein</topology>
    </subcellularLocation>
</comment>
<comment type="similarity">
    <text evidence="1">Belongs to the AAE transporter (TC 2.A.81) family. YidE subfamily.</text>
</comment>
<keyword id="KW-1003">Cell membrane</keyword>
<keyword id="KW-0472">Membrane</keyword>
<keyword id="KW-0677">Repeat</keyword>
<keyword id="KW-0812">Transmembrane</keyword>
<keyword id="KW-1133">Transmembrane helix</keyword>
<keyword id="KW-0813">Transport</keyword>